<proteinExistence type="inferred from homology"/>
<keyword id="KW-0479">Metal-binding</keyword>
<keyword id="KW-0533">Nickel</keyword>
<keyword id="KW-0560">Oxidoreductase</keyword>
<keyword id="KW-1185">Reference proteome</keyword>
<keyword id="KW-0712">Selenocysteine</keyword>
<reference key="1">
    <citation type="journal article" date="2002" name="Proc. Natl. Acad. Sci. U.S.A.">
        <title>The complete genome of hyperthermophile Methanopyrus kandleri AV19 and monophyly of archaeal methanogens.</title>
        <authorList>
            <person name="Slesarev A.I."/>
            <person name="Mezhevaya K.V."/>
            <person name="Makarova K.S."/>
            <person name="Polushin N.N."/>
            <person name="Shcherbinina O.V."/>
            <person name="Shakhova V.V."/>
            <person name="Belova G.I."/>
            <person name="Aravind L."/>
            <person name="Natale D.A."/>
            <person name="Rogozin I.B."/>
            <person name="Tatusov R.L."/>
            <person name="Wolf Y.I."/>
            <person name="Stetter K.O."/>
            <person name="Malykh A.G."/>
            <person name="Koonin E.V."/>
            <person name="Kozyavkin S.A."/>
        </authorList>
    </citation>
    <scope>NUCLEOTIDE SEQUENCE [LARGE SCALE GENOMIC DNA]</scope>
    <source>
        <strain>AV19 / DSM 6324 / JCM 9639 / NBRC 100938</strain>
    </source>
</reference>
<protein>
    <recommendedName>
        <fullName>F420-non-reducing hydrogenase vhu subunit U</fullName>
        <ecNumber>1.12.99.-</ecNumber>
    </recommendedName>
</protein>
<name>VHUU_METKA</name>
<feature type="chain" id="PRO_0000249594" description="F420-non-reducing hydrogenase vhu subunit U">
    <location>
        <begin position="1"/>
        <end position="27"/>
    </location>
</feature>
<feature type="propeptide" id="PRO_0000249595" description="Removed in mature form" evidence="1">
    <location>
        <begin position="28"/>
        <end position="42"/>
    </location>
</feature>
<feature type="binding site" evidence="2">
    <location>
        <position position="21"/>
    </location>
    <ligand>
        <name>Ni(2+)</name>
        <dbReference type="ChEBI" id="CHEBI:49786"/>
    </ligand>
</feature>
<feature type="binding site" evidence="2">
    <location>
        <position position="24"/>
    </location>
    <ligand>
        <name>Ni(2+)</name>
        <dbReference type="ChEBI" id="CHEBI:49786"/>
    </ligand>
</feature>
<feature type="non-standard amino acid" description="Selenocysteine" evidence="3">
    <location>
        <position position="21"/>
    </location>
</feature>
<organism>
    <name type="scientific">Methanopyrus kandleri (strain AV19 / DSM 6324 / JCM 9639 / NBRC 100938)</name>
    <dbReference type="NCBI Taxonomy" id="190192"/>
    <lineage>
        <taxon>Archaea</taxon>
        <taxon>Methanobacteriati</taxon>
        <taxon>Methanobacteriota</taxon>
        <taxon>Methanomada group</taxon>
        <taxon>Methanopyri</taxon>
        <taxon>Methanopyrales</taxon>
        <taxon>Methanopyraceae</taxon>
        <taxon>Methanopyrus</taxon>
    </lineage>
</organism>
<accession>P0C1V6</accession>
<comment type="cofactor">
    <cofactor evidence="3">
        <name>Ni(2+)</name>
        <dbReference type="ChEBI" id="CHEBI:49786"/>
    </cofactor>
</comment>
<comment type="subunit">
    <text evidence="1">The F420-non-reducing hydrogenase vhu is composed of four subunits; VhuA, VhuD, VhuG and VhuU.</text>
</comment>
<comment type="miscellaneous">
    <text>The large subunit of Vhu is split into VhuA and VhuU. Each contributes two ligands to the [NiFeSe] center.</text>
</comment>
<comment type="similarity">
    <text evidence="3">Belongs to the [NiFe]/[NiFeSe] hydrogenase large subunit family.</text>
</comment>
<sequence length="42" mass="5092">MAEKRDVLNYLEMVIRSYDIULSCAAHVLDRVKFRIERKDED</sequence>
<gene>
    <name type="primary">vhuU</name>
    <name type="ordered locus">MK0177.1</name>
</gene>
<evidence type="ECO:0000250" key="1"/>
<evidence type="ECO:0000255" key="2"/>
<evidence type="ECO:0000305" key="3"/>
<dbReference type="EC" id="1.12.99.-"/>
<dbReference type="EMBL" id="AE009439">
    <property type="status" value="NOT_ANNOTATED_CDS"/>
    <property type="molecule type" value="Genomic_DNA"/>
</dbReference>
<dbReference type="RefSeq" id="WP_255296114.1">
    <property type="nucleotide sequence ID" value="NC_003551.1"/>
</dbReference>
<dbReference type="GeneID" id="75933543"/>
<dbReference type="InParanoid" id="P0C1V6"/>
<dbReference type="Proteomes" id="UP000001826">
    <property type="component" value="Chromosome"/>
</dbReference>
<dbReference type="GO" id="GO:0008901">
    <property type="term" value="F:ferredoxin hydrogenase activity"/>
    <property type="evidence" value="ECO:0007669"/>
    <property type="project" value="InterPro"/>
</dbReference>
<dbReference type="GO" id="GO:0016151">
    <property type="term" value="F:nickel cation binding"/>
    <property type="evidence" value="ECO:0007669"/>
    <property type="project" value="InterPro"/>
</dbReference>
<dbReference type="InterPro" id="IPR053438">
    <property type="entry name" value="F420-Hydrogenase_large-U"/>
</dbReference>
<dbReference type="InterPro" id="IPR018194">
    <property type="entry name" value="Ni-dep_hyd_lsu_Ni_BS"/>
</dbReference>
<dbReference type="InterPro" id="IPR029014">
    <property type="entry name" value="NiFe-Hase_large"/>
</dbReference>
<dbReference type="NCBIfam" id="NF041786">
    <property type="entry name" value="VhuU"/>
    <property type="match status" value="1"/>
</dbReference>
<dbReference type="SUPFAM" id="SSF56762">
    <property type="entry name" value="HydB/Nqo4-like"/>
    <property type="match status" value="1"/>
</dbReference>
<dbReference type="PROSITE" id="PS00508">
    <property type="entry name" value="NI_HGENASE_L_2"/>
    <property type="match status" value="1"/>
</dbReference>